<keyword id="KW-0378">Hydrolase</keyword>
<keyword id="KW-0479">Metal-binding</keyword>
<keyword id="KW-0482">Metalloprotease</keyword>
<keyword id="KW-0645">Protease</keyword>
<keyword id="KW-0862">Zinc</keyword>
<reference key="1">
    <citation type="journal article" date="2006" name="J. Bacteriol.">
        <title>The Methanosarcina barkeri genome: comparative analysis with Methanosarcina acetivorans and Methanosarcina mazei reveals extensive rearrangement within methanosarcinal genomes.</title>
        <authorList>
            <person name="Maeder D.L."/>
            <person name="Anderson I."/>
            <person name="Brettin T.S."/>
            <person name="Bruce D.C."/>
            <person name="Gilna P."/>
            <person name="Han C.S."/>
            <person name="Lapidus A."/>
            <person name="Metcalf W.W."/>
            <person name="Saunders E."/>
            <person name="Tapia R."/>
            <person name="Sowers K.R."/>
        </authorList>
    </citation>
    <scope>NUCLEOTIDE SEQUENCE [LARGE SCALE GENOMIC DNA]</scope>
    <source>
        <strain>Fusaro / DSM 804</strain>
    </source>
</reference>
<sequence>MEISKVRIQDIPEEERPRERLIRNGPESLSNSELLGVILRTGSNKENVVSLSSRIFSEYSIKQLSLANVSRLMKVHGVGKAKAAQIAAVFELARRLETFVEEPKRKVCSPKDVYTLMYPKMREQKKEKFITLCLDTKNQILKEEVVSIGSLNASIVHPREVFKSALMESSASVIMIHNHPSGDPSPSREDIMVTEKMVEGGKLLGIDVLDHIIIGEGRYVSLKDEGFVR</sequence>
<evidence type="ECO:0000255" key="1">
    <source>
        <dbReference type="PROSITE-ProRule" id="PRU01182"/>
    </source>
</evidence>
<evidence type="ECO:0000305" key="2"/>
<name>Y2303_METBF</name>
<organism>
    <name type="scientific">Methanosarcina barkeri (strain Fusaro / DSM 804)</name>
    <dbReference type="NCBI Taxonomy" id="269797"/>
    <lineage>
        <taxon>Archaea</taxon>
        <taxon>Methanobacteriati</taxon>
        <taxon>Methanobacteriota</taxon>
        <taxon>Stenosarchaea group</taxon>
        <taxon>Methanomicrobia</taxon>
        <taxon>Methanosarcinales</taxon>
        <taxon>Methanosarcinaceae</taxon>
        <taxon>Methanosarcina</taxon>
    </lineage>
</organism>
<comment type="similarity">
    <text evidence="2">Belongs to the UPF0758 family.</text>
</comment>
<feature type="chain" id="PRO_1000001665" description="UPF0758 protein Mbar_A2303">
    <location>
        <begin position="1"/>
        <end position="229"/>
    </location>
</feature>
<feature type="domain" description="MPN" evidence="1">
    <location>
        <begin position="106"/>
        <end position="228"/>
    </location>
</feature>
<feature type="short sequence motif" description="JAMM motif" evidence="1">
    <location>
        <begin position="177"/>
        <end position="190"/>
    </location>
</feature>
<feature type="binding site" evidence="1">
    <location>
        <position position="177"/>
    </location>
    <ligand>
        <name>Zn(2+)</name>
        <dbReference type="ChEBI" id="CHEBI:29105"/>
        <note>catalytic</note>
    </ligand>
</feature>
<feature type="binding site" evidence="1">
    <location>
        <position position="179"/>
    </location>
    <ligand>
        <name>Zn(2+)</name>
        <dbReference type="ChEBI" id="CHEBI:29105"/>
        <note>catalytic</note>
    </ligand>
</feature>
<feature type="binding site" evidence="1">
    <location>
        <position position="190"/>
    </location>
    <ligand>
        <name>Zn(2+)</name>
        <dbReference type="ChEBI" id="CHEBI:29105"/>
        <note>catalytic</note>
    </ligand>
</feature>
<protein>
    <recommendedName>
        <fullName>UPF0758 protein Mbar_A2303</fullName>
    </recommendedName>
</protein>
<gene>
    <name type="ordered locus">Mbar_A2303</name>
</gene>
<accession>Q46A65</accession>
<dbReference type="EMBL" id="CP000099">
    <property type="protein sequence ID" value="AAZ71227.1"/>
    <property type="molecule type" value="Genomic_DNA"/>
</dbReference>
<dbReference type="SMR" id="Q46A65"/>
<dbReference type="STRING" id="269797.Mbar_A2303"/>
<dbReference type="PaxDb" id="269797-Mbar_A2303"/>
<dbReference type="KEGG" id="mba:Mbar_A2303"/>
<dbReference type="eggNOG" id="arCOG04919">
    <property type="taxonomic scope" value="Archaea"/>
</dbReference>
<dbReference type="HOGENOM" id="CLU_073529_0_2_2"/>
<dbReference type="OrthoDB" id="303892at2157"/>
<dbReference type="GO" id="GO:0046872">
    <property type="term" value="F:metal ion binding"/>
    <property type="evidence" value="ECO:0007669"/>
    <property type="project" value="UniProtKB-KW"/>
</dbReference>
<dbReference type="GO" id="GO:0008237">
    <property type="term" value="F:metallopeptidase activity"/>
    <property type="evidence" value="ECO:0007669"/>
    <property type="project" value="UniProtKB-KW"/>
</dbReference>
<dbReference type="GO" id="GO:0006508">
    <property type="term" value="P:proteolysis"/>
    <property type="evidence" value="ECO:0007669"/>
    <property type="project" value="UniProtKB-KW"/>
</dbReference>
<dbReference type="CDD" id="cd08071">
    <property type="entry name" value="MPN_DUF2466"/>
    <property type="match status" value="1"/>
</dbReference>
<dbReference type="Gene3D" id="3.40.140.10">
    <property type="entry name" value="Cytidine Deaminase, domain 2"/>
    <property type="match status" value="1"/>
</dbReference>
<dbReference type="InterPro" id="IPR037518">
    <property type="entry name" value="MPN"/>
</dbReference>
<dbReference type="InterPro" id="IPR025657">
    <property type="entry name" value="RadC_JAB"/>
</dbReference>
<dbReference type="InterPro" id="IPR001405">
    <property type="entry name" value="UPF0758"/>
</dbReference>
<dbReference type="InterPro" id="IPR020891">
    <property type="entry name" value="UPF0758_CS"/>
</dbReference>
<dbReference type="InterPro" id="IPR046778">
    <property type="entry name" value="UPF0758_N"/>
</dbReference>
<dbReference type="NCBIfam" id="NF000642">
    <property type="entry name" value="PRK00024.1"/>
    <property type="match status" value="1"/>
</dbReference>
<dbReference type="NCBIfam" id="TIGR00608">
    <property type="entry name" value="radc"/>
    <property type="match status" value="1"/>
</dbReference>
<dbReference type="PANTHER" id="PTHR30471">
    <property type="entry name" value="DNA REPAIR PROTEIN RADC"/>
    <property type="match status" value="1"/>
</dbReference>
<dbReference type="PANTHER" id="PTHR30471:SF3">
    <property type="entry name" value="UPF0758 PROTEIN YEES-RELATED"/>
    <property type="match status" value="1"/>
</dbReference>
<dbReference type="Pfam" id="PF04002">
    <property type="entry name" value="RadC"/>
    <property type="match status" value="1"/>
</dbReference>
<dbReference type="Pfam" id="PF20582">
    <property type="entry name" value="UPF0758_N"/>
    <property type="match status" value="1"/>
</dbReference>
<dbReference type="PROSITE" id="PS50249">
    <property type="entry name" value="MPN"/>
    <property type="match status" value="1"/>
</dbReference>
<dbReference type="PROSITE" id="PS01302">
    <property type="entry name" value="UPF0758"/>
    <property type="match status" value="1"/>
</dbReference>
<proteinExistence type="inferred from homology"/>